<reference key="1">
    <citation type="journal article" date="2006" name="J. Bacteriol.">
        <title>Whole-genome sequence of Listeria welshimeri reveals common steps in genome reduction with Listeria innocua as compared to Listeria monocytogenes.</title>
        <authorList>
            <person name="Hain T."/>
            <person name="Steinweg C."/>
            <person name="Kuenne C.T."/>
            <person name="Billion A."/>
            <person name="Ghai R."/>
            <person name="Chatterjee S.S."/>
            <person name="Domann E."/>
            <person name="Kaerst U."/>
            <person name="Goesmann A."/>
            <person name="Bekel T."/>
            <person name="Bartels D."/>
            <person name="Kaiser O."/>
            <person name="Meyer F."/>
            <person name="Puehler A."/>
            <person name="Weisshaar B."/>
            <person name="Wehland J."/>
            <person name="Liang C."/>
            <person name="Dandekar T."/>
            <person name="Lampidis R."/>
            <person name="Kreft J."/>
            <person name="Goebel W."/>
            <person name="Chakraborty T."/>
        </authorList>
    </citation>
    <scope>NUCLEOTIDE SEQUENCE [LARGE SCALE GENOMIC DNA]</scope>
    <source>
        <strain>ATCC 35897 / DSM 20650 / CCUG 15529 / CIP 8149 / NCTC 11857 / SLCC 5334 / V8</strain>
    </source>
</reference>
<feature type="chain" id="PRO_0000364875" description="Ferredoxin--NADP reductase 1">
    <location>
        <begin position="1"/>
        <end position="332"/>
    </location>
</feature>
<feature type="binding site" evidence="1">
    <location>
        <position position="35"/>
    </location>
    <ligand>
        <name>FAD</name>
        <dbReference type="ChEBI" id="CHEBI:57692"/>
    </ligand>
</feature>
<feature type="binding site" evidence="1">
    <location>
        <position position="43"/>
    </location>
    <ligand>
        <name>FAD</name>
        <dbReference type="ChEBI" id="CHEBI:57692"/>
    </ligand>
</feature>
<feature type="binding site" evidence="1">
    <location>
        <position position="48"/>
    </location>
    <ligand>
        <name>FAD</name>
        <dbReference type="ChEBI" id="CHEBI:57692"/>
    </ligand>
</feature>
<feature type="binding site" evidence="1">
    <location>
        <position position="88"/>
    </location>
    <ligand>
        <name>FAD</name>
        <dbReference type="ChEBI" id="CHEBI:57692"/>
    </ligand>
</feature>
<feature type="binding site" evidence="1">
    <location>
        <position position="123"/>
    </location>
    <ligand>
        <name>FAD</name>
        <dbReference type="ChEBI" id="CHEBI:57692"/>
    </ligand>
</feature>
<feature type="binding site" evidence="1">
    <location>
        <position position="284"/>
    </location>
    <ligand>
        <name>FAD</name>
        <dbReference type="ChEBI" id="CHEBI:57692"/>
    </ligand>
</feature>
<feature type="binding site" evidence="1">
    <location>
        <position position="325"/>
    </location>
    <ligand>
        <name>FAD</name>
        <dbReference type="ChEBI" id="CHEBI:57692"/>
    </ligand>
</feature>
<proteinExistence type="inferred from homology"/>
<gene>
    <name type="ordered locus">lwe1987</name>
</gene>
<name>FENR1_LISW6</name>
<protein>
    <recommendedName>
        <fullName evidence="1">Ferredoxin--NADP reductase 1</fullName>
        <shortName evidence="1">FNR 1</shortName>
        <shortName evidence="1">Fd-NADP(+) reductase 1</shortName>
        <ecNumber evidence="1">1.18.1.2</ecNumber>
    </recommendedName>
</protein>
<keyword id="KW-0274">FAD</keyword>
<keyword id="KW-0285">Flavoprotein</keyword>
<keyword id="KW-0521">NADP</keyword>
<keyword id="KW-0560">Oxidoreductase</keyword>
<accession>A0AK73</accession>
<dbReference type="EC" id="1.18.1.2" evidence="1"/>
<dbReference type="EMBL" id="AM263198">
    <property type="protein sequence ID" value="CAK21405.1"/>
    <property type="molecule type" value="Genomic_DNA"/>
</dbReference>
<dbReference type="RefSeq" id="WP_011702752.1">
    <property type="nucleotide sequence ID" value="NC_008555.1"/>
</dbReference>
<dbReference type="SMR" id="A0AK73"/>
<dbReference type="STRING" id="386043.lwe1987"/>
<dbReference type="GeneID" id="61189887"/>
<dbReference type="KEGG" id="lwe:lwe1987"/>
<dbReference type="eggNOG" id="COG0492">
    <property type="taxonomic scope" value="Bacteria"/>
</dbReference>
<dbReference type="HOGENOM" id="CLU_031864_5_5_9"/>
<dbReference type="OrthoDB" id="9806179at2"/>
<dbReference type="Proteomes" id="UP000000779">
    <property type="component" value="Chromosome"/>
</dbReference>
<dbReference type="GO" id="GO:0004324">
    <property type="term" value="F:ferredoxin-NADP+ reductase activity"/>
    <property type="evidence" value="ECO:0007669"/>
    <property type="project" value="UniProtKB-UniRule"/>
</dbReference>
<dbReference type="GO" id="GO:0050660">
    <property type="term" value="F:flavin adenine dinucleotide binding"/>
    <property type="evidence" value="ECO:0007669"/>
    <property type="project" value="UniProtKB-UniRule"/>
</dbReference>
<dbReference type="GO" id="GO:0050661">
    <property type="term" value="F:NADP binding"/>
    <property type="evidence" value="ECO:0007669"/>
    <property type="project" value="UniProtKB-UniRule"/>
</dbReference>
<dbReference type="Gene3D" id="3.50.50.60">
    <property type="entry name" value="FAD/NAD(P)-binding domain"/>
    <property type="match status" value="2"/>
</dbReference>
<dbReference type="HAMAP" id="MF_01685">
    <property type="entry name" value="FENR2"/>
    <property type="match status" value="1"/>
</dbReference>
<dbReference type="InterPro" id="IPR036188">
    <property type="entry name" value="FAD/NAD-bd_sf"/>
</dbReference>
<dbReference type="InterPro" id="IPR023753">
    <property type="entry name" value="FAD/NAD-binding_dom"/>
</dbReference>
<dbReference type="InterPro" id="IPR022890">
    <property type="entry name" value="Fd--NADP_Rdtase_type_2"/>
</dbReference>
<dbReference type="InterPro" id="IPR050097">
    <property type="entry name" value="Ferredoxin-NADP_redctase_2"/>
</dbReference>
<dbReference type="PANTHER" id="PTHR48105">
    <property type="entry name" value="THIOREDOXIN REDUCTASE 1-RELATED-RELATED"/>
    <property type="match status" value="1"/>
</dbReference>
<dbReference type="Pfam" id="PF07992">
    <property type="entry name" value="Pyr_redox_2"/>
    <property type="match status" value="1"/>
</dbReference>
<dbReference type="PRINTS" id="PR00368">
    <property type="entry name" value="FADPNR"/>
</dbReference>
<dbReference type="PRINTS" id="PR00469">
    <property type="entry name" value="PNDRDTASEII"/>
</dbReference>
<dbReference type="SUPFAM" id="SSF51905">
    <property type="entry name" value="FAD/NAD(P)-binding domain"/>
    <property type="match status" value="1"/>
</dbReference>
<comment type="catalytic activity">
    <reaction evidence="1">
        <text>2 reduced [2Fe-2S]-[ferredoxin] + NADP(+) + H(+) = 2 oxidized [2Fe-2S]-[ferredoxin] + NADPH</text>
        <dbReference type="Rhea" id="RHEA:20125"/>
        <dbReference type="Rhea" id="RHEA-COMP:10000"/>
        <dbReference type="Rhea" id="RHEA-COMP:10001"/>
        <dbReference type="ChEBI" id="CHEBI:15378"/>
        <dbReference type="ChEBI" id="CHEBI:33737"/>
        <dbReference type="ChEBI" id="CHEBI:33738"/>
        <dbReference type="ChEBI" id="CHEBI:57783"/>
        <dbReference type="ChEBI" id="CHEBI:58349"/>
        <dbReference type="EC" id="1.18.1.2"/>
    </reaction>
</comment>
<comment type="cofactor">
    <cofactor evidence="1">
        <name>FAD</name>
        <dbReference type="ChEBI" id="CHEBI:57692"/>
    </cofactor>
    <text evidence="1">Binds 1 FAD per subunit.</text>
</comment>
<comment type="subunit">
    <text evidence="1">Homodimer.</text>
</comment>
<comment type="similarity">
    <text evidence="1">Belongs to the ferredoxin--NADP reductase type 2 family.</text>
</comment>
<evidence type="ECO:0000255" key="1">
    <source>
        <dbReference type="HAMAP-Rule" id="MF_01685"/>
    </source>
</evidence>
<organism>
    <name type="scientific">Listeria welshimeri serovar 6b (strain ATCC 35897 / DSM 20650 / CCUG 15529 / CIP 8149 / NCTC 11857 / SLCC 5334 / V8)</name>
    <dbReference type="NCBI Taxonomy" id="386043"/>
    <lineage>
        <taxon>Bacteria</taxon>
        <taxon>Bacillati</taxon>
        <taxon>Bacillota</taxon>
        <taxon>Bacilli</taxon>
        <taxon>Bacillales</taxon>
        <taxon>Listeriaceae</taxon>
        <taxon>Listeria</taxon>
    </lineage>
</organism>
<sequence>MPNEVYDVTIIGGGPIGLFSAFYSGLRSMKTKIIDAEPAVGGKVRYFFPEKIIRDIGGIPAITGENLVANLKEQAETFHPTIVCNERVVDVTRLTDGTFQLITHNGSIHFSKTIVIATGSGTFEVNKLEALHVEDFPLAIHYDVKNIEQFRDKVVAVSGGGNSAIDWAQTLEPIAKQVHLIYRGEDFKAHEESVRELKNSRVKIHIHHEIHELFGTNNQLAEISVICNQTQATKTIETEALFINHGVKVDLGTMAEWGFEQADFGIVVDDEMKTTVPGIFACGDSATYPRKLRIIAAGLHEGPIAINSAKKYLEPTAADEAMISTHHESFIG</sequence>